<organism>
    <name type="scientific">Legionella pneumophila (strain Corby)</name>
    <dbReference type="NCBI Taxonomy" id="400673"/>
    <lineage>
        <taxon>Bacteria</taxon>
        <taxon>Pseudomonadati</taxon>
        <taxon>Pseudomonadota</taxon>
        <taxon>Gammaproteobacteria</taxon>
        <taxon>Legionellales</taxon>
        <taxon>Legionellaceae</taxon>
        <taxon>Legionella</taxon>
    </lineage>
</organism>
<comment type="function">
    <text evidence="1">Protein S19 forms a complex with S13 that binds strongly to the 16S ribosomal RNA.</text>
</comment>
<comment type="similarity">
    <text evidence="1">Belongs to the universal ribosomal protein uS19 family.</text>
</comment>
<feature type="chain" id="PRO_1000051068" description="Small ribosomal subunit protein uS19">
    <location>
        <begin position="1"/>
        <end position="92"/>
    </location>
</feature>
<proteinExistence type="inferred from homology"/>
<protein>
    <recommendedName>
        <fullName evidence="1">Small ribosomal subunit protein uS19</fullName>
    </recommendedName>
    <alternativeName>
        <fullName evidence="2">30S ribosomal protein S19</fullName>
    </alternativeName>
</protein>
<sequence length="92" mass="10319">MARSIRKGPFIDHHLISKVEAAIESKSKKPIKTWSRRSTIVPEMIDLTIAVHNGKDHVPVFITDNMVGHKLGEFAMTRTFKGHSGDRKAKGK</sequence>
<keyword id="KW-0687">Ribonucleoprotein</keyword>
<keyword id="KW-0689">Ribosomal protein</keyword>
<keyword id="KW-0694">RNA-binding</keyword>
<keyword id="KW-0699">rRNA-binding</keyword>
<name>RS19_LEGPC</name>
<gene>
    <name evidence="1" type="primary">rpsS</name>
    <name type="ordered locus">LPC_3009</name>
</gene>
<reference key="1">
    <citation type="submission" date="2006-11" db="EMBL/GenBank/DDBJ databases">
        <title>Identification and characterization of a new conjugation/ type IVA secretion system (trb/tra) of L. pneumophila Corby localized on a mobile genomic island.</title>
        <authorList>
            <person name="Gloeckner G."/>
            <person name="Albert-Weissenberger C."/>
            <person name="Weinmann E."/>
            <person name="Jacobi S."/>
            <person name="Schunder E."/>
            <person name="Steinert M."/>
            <person name="Buchrieser C."/>
            <person name="Hacker J."/>
            <person name="Heuner K."/>
        </authorList>
    </citation>
    <scope>NUCLEOTIDE SEQUENCE [LARGE SCALE GENOMIC DNA]</scope>
    <source>
        <strain>Corby</strain>
    </source>
</reference>
<dbReference type="EMBL" id="CP000675">
    <property type="protein sequence ID" value="ABQ56910.1"/>
    <property type="molecule type" value="Genomic_DNA"/>
</dbReference>
<dbReference type="RefSeq" id="WP_010946728.1">
    <property type="nucleotide sequence ID" value="NZ_JAPMSS010000006.1"/>
</dbReference>
<dbReference type="SMR" id="A5IHR0"/>
<dbReference type="GeneID" id="57034336"/>
<dbReference type="KEGG" id="lpc:LPC_3009"/>
<dbReference type="HOGENOM" id="CLU_144911_0_1_6"/>
<dbReference type="GO" id="GO:0005737">
    <property type="term" value="C:cytoplasm"/>
    <property type="evidence" value="ECO:0007669"/>
    <property type="project" value="UniProtKB-ARBA"/>
</dbReference>
<dbReference type="GO" id="GO:0015935">
    <property type="term" value="C:small ribosomal subunit"/>
    <property type="evidence" value="ECO:0007669"/>
    <property type="project" value="InterPro"/>
</dbReference>
<dbReference type="GO" id="GO:0019843">
    <property type="term" value="F:rRNA binding"/>
    <property type="evidence" value="ECO:0007669"/>
    <property type="project" value="UniProtKB-UniRule"/>
</dbReference>
<dbReference type="GO" id="GO:0003735">
    <property type="term" value="F:structural constituent of ribosome"/>
    <property type="evidence" value="ECO:0007669"/>
    <property type="project" value="InterPro"/>
</dbReference>
<dbReference type="GO" id="GO:0000028">
    <property type="term" value="P:ribosomal small subunit assembly"/>
    <property type="evidence" value="ECO:0007669"/>
    <property type="project" value="TreeGrafter"/>
</dbReference>
<dbReference type="GO" id="GO:0006412">
    <property type="term" value="P:translation"/>
    <property type="evidence" value="ECO:0007669"/>
    <property type="project" value="UniProtKB-UniRule"/>
</dbReference>
<dbReference type="FunFam" id="3.30.860.10:FF:000001">
    <property type="entry name" value="30S ribosomal protein S19"/>
    <property type="match status" value="1"/>
</dbReference>
<dbReference type="Gene3D" id="3.30.860.10">
    <property type="entry name" value="30s Ribosomal Protein S19, Chain A"/>
    <property type="match status" value="1"/>
</dbReference>
<dbReference type="HAMAP" id="MF_00531">
    <property type="entry name" value="Ribosomal_uS19"/>
    <property type="match status" value="1"/>
</dbReference>
<dbReference type="InterPro" id="IPR002222">
    <property type="entry name" value="Ribosomal_uS19"/>
</dbReference>
<dbReference type="InterPro" id="IPR005732">
    <property type="entry name" value="Ribosomal_uS19_bac-type"/>
</dbReference>
<dbReference type="InterPro" id="IPR020934">
    <property type="entry name" value="Ribosomal_uS19_CS"/>
</dbReference>
<dbReference type="InterPro" id="IPR023575">
    <property type="entry name" value="Ribosomal_uS19_SF"/>
</dbReference>
<dbReference type="NCBIfam" id="TIGR01050">
    <property type="entry name" value="rpsS_bact"/>
    <property type="match status" value="1"/>
</dbReference>
<dbReference type="PANTHER" id="PTHR11880">
    <property type="entry name" value="RIBOSOMAL PROTEIN S19P FAMILY MEMBER"/>
    <property type="match status" value="1"/>
</dbReference>
<dbReference type="PANTHER" id="PTHR11880:SF8">
    <property type="entry name" value="SMALL RIBOSOMAL SUBUNIT PROTEIN US19M"/>
    <property type="match status" value="1"/>
</dbReference>
<dbReference type="Pfam" id="PF00203">
    <property type="entry name" value="Ribosomal_S19"/>
    <property type="match status" value="1"/>
</dbReference>
<dbReference type="PIRSF" id="PIRSF002144">
    <property type="entry name" value="Ribosomal_S19"/>
    <property type="match status" value="1"/>
</dbReference>
<dbReference type="PRINTS" id="PR00975">
    <property type="entry name" value="RIBOSOMALS19"/>
</dbReference>
<dbReference type="SUPFAM" id="SSF54570">
    <property type="entry name" value="Ribosomal protein S19"/>
    <property type="match status" value="1"/>
</dbReference>
<dbReference type="PROSITE" id="PS00323">
    <property type="entry name" value="RIBOSOMAL_S19"/>
    <property type="match status" value="1"/>
</dbReference>
<evidence type="ECO:0000255" key="1">
    <source>
        <dbReference type="HAMAP-Rule" id="MF_00531"/>
    </source>
</evidence>
<evidence type="ECO:0000305" key="2"/>
<accession>A5IHR0</accession>